<dbReference type="EC" id="1.8.1.4"/>
<dbReference type="STRING" id="4113.P80503"/>
<dbReference type="PaxDb" id="4113-PGSC0003DMT400011741"/>
<dbReference type="eggNOG" id="KOG1335">
    <property type="taxonomic scope" value="Eukaryota"/>
</dbReference>
<dbReference type="InParanoid" id="P80503"/>
<dbReference type="BRENDA" id="1.2.1.104">
    <property type="organism ID" value="5757"/>
</dbReference>
<dbReference type="BRENDA" id="1.2.1.105">
    <property type="organism ID" value="5757"/>
</dbReference>
<dbReference type="SABIO-RK" id="P80503"/>
<dbReference type="Proteomes" id="UP000011115">
    <property type="component" value="Unassembled WGS sequence"/>
</dbReference>
<dbReference type="GO" id="GO:0005759">
    <property type="term" value="C:mitochondrial matrix"/>
    <property type="evidence" value="ECO:0007669"/>
    <property type="project" value="UniProtKB-SubCell"/>
</dbReference>
<dbReference type="GO" id="GO:0004148">
    <property type="term" value="F:dihydrolipoyl dehydrogenase (NADH) activity"/>
    <property type="evidence" value="ECO:0007669"/>
    <property type="project" value="UniProtKB-EC"/>
</dbReference>
<dbReference type="Gene3D" id="3.50.50.60">
    <property type="entry name" value="FAD/NAD(P)-binding domain"/>
    <property type="match status" value="1"/>
</dbReference>
<dbReference type="InterPro" id="IPR050151">
    <property type="entry name" value="Class-I_Pyr_Nuc-Dis_Oxidored"/>
</dbReference>
<dbReference type="InterPro" id="IPR036188">
    <property type="entry name" value="FAD/NAD-bd_sf"/>
</dbReference>
<dbReference type="PANTHER" id="PTHR22912:SF223">
    <property type="entry name" value="DIHYDROLIPOYL DEHYDROGENASE 1, MITOCHONDRIAL"/>
    <property type="match status" value="1"/>
</dbReference>
<dbReference type="PANTHER" id="PTHR22912">
    <property type="entry name" value="DISULFIDE OXIDOREDUCTASE"/>
    <property type="match status" value="1"/>
</dbReference>
<dbReference type="Pfam" id="PF12831">
    <property type="entry name" value="FAD_oxidored"/>
    <property type="match status" value="1"/>
</dbReference>
<dbReference type="SUPFAM" id="SSF51905">
    <property type="entry name" value="FAD/NAD(P)-binding domain"/>
    <property type="match status" value="1"/>
</dbReference>
<protein>
    <recommendedName>
        <fullName>Dihydrolipoyl dehydrogenase</fullName>
        <ecNumber>1.8.1.4</ecNumber>
    </recommendedName>
    <alternativeName>
        <fullName>Dihydrolipoamide dehydrogenase</fullName>
    </alternativeName>
</protein>
<organism>
    <name type="scientific">Solanum tuberosum</name>
    <name type="common">Potato</name>
    <dbReference type="NCBI Taxonomy" id="4113"/>
    <lineage>
        <taxon>Eukaryota</taxon>
        <taxon>Viridiplantae</taxon>
        <taxon>Streptophyta</taxon>
        <taxon>Embryophyta</taxon>
        <taxon>Tracheophyta</taxon>
        <taxon>Spermatophyta</taxon>
        <taxon>Magnoliopsida</taxon>
        <taxon>eudicotyledons</taxon>
        <taxon>Gunneridae</taxon>
        <taxon>Pentapetalae</taxon>
        <taxon>asterids</taxon>
        <taxon>lamiids</taxon>
        <taxon>Solanales</taxon>
        <taxon>Solanaceae</taxon>
        <taxon>Solanoideae</taxon>
        <taxon>Solaneae</taxon>
        <taxon>Solanum</taxon>
    </lineage>
</organism>
<comment type="function">
    <text evidence="1">Lipoamide dehydrogenase is a component of the glycine cleavage system as well as of the alpha-ketoacid dehydrogenase complexes. The pyruvate dehydrogenase complex contains multiple copies of three enzymatic components: pyruvate dehydrogenase (E1), dihydrolipoamide acetyltransferase (E2) and lipoamide dehydrogenase (E3) (By similarity).</text>
</comment>
<comment type="catalytic activity">
    <reaction>
        <text>N(6)-[(R)-dihydrolipoyl]-L-lysyl-[protein] + NAD(+) = N(6)-[(R)-lipoyl]-L-lysyl-[protein] + NADH + H(+)</text>
        <dbReference type="Rhea" id="RHEA:15045"/>
        <dbReference type="Rhea" id="RHEA-COMP:10474"/>
        <dbReference type="Rhea" id="RHEA-COMP:10475"/>
        <dbReference type="ChEBI" id="CHEBI:15378"/>
        <dbReference type="ChEBI" id="CHEBI:57540"/>
        <dbReference type="ChEBI" id="CHEBI:57945"/>
        <dbReference type="ChEBI" id="CHEBI:83099"/>
        <dbReference type="ChEBI" id="CHEBI:83100"/>
        <dbReference type="EC" id="1.8.1.4"/>
    </reaction>
</comment>
<comment type="cofactor">
    <cofactor evidence="1">
        <name>FAD</name>
        <dbReference type="ChEBI" id="CHEBI:57692"/>
    </cofactor>
    <text evidence="1">Binds 1 FAD per subunit.</text>
</comment>
<comment type="subunit">
    <text>Homodimer.</text>
</comment>
<comment type="subcellular location">
    <subcellularLocation>
        <location>Mitochondrion matrix</location>
    </subcellularLocation>
</comment>
<comment type="miscellaneous">
    <text>The active site is a redox-active disulfide bond.</text>
</comment>
<comment type="similarity">
    <text evidence="2">Belongs to the class-I pyridine nucleotide-disulfide oxidoreductase family.</text>
</comment>
<proteinExistence type="evidence at protein level"/>
<reference key="1">
    <citation type="journal article" date="1996" name="Plant J.">
        <title>New insights into the composition, molecular mass and stoichiometry of the protein complexes of plant mitochondria.</title>
        <authorList>
            <person name="Jansch L."/>
            <person name="Kruft V."/>
            <person name="Schmitz U.K."/>
            <person name="Braun H.P."/>
        </authorList>
    </citation>
    <scope>PROTEIN SEQUENCE</scope>
    <source>
        <tissue>Tuber</tissue>
    </source>
</reference>
<reference key="2">
    <citation type="journal article" date="1998" name="Biochem. J.">
        <title>Plant mitochondrial pyruvate dehydrogenase complex: purification and identification of catalytic components in potato.</title>
        <authorList>
            <person name="Millar A.H."/>
            <person name="Knorpp C."/>
            <person name="Leaver C.J."/>
            <person name="Hill S.A."/>
        </authorList>
    </citation>
    <scope>PROTEIN SEQUENCE OF 1-20</scope>
    <source>
        <strain>cv. Romano</strain>
        <tissue>Tuber</tissue>
    </source>
</reference>
<reference key="3">
    <citation type="journal article" date="1999" name="Biochem. J.">
        <title>Plant mitochondrial 2-oxoglutarate dehydrogenase complex: purification and characterization in potato.</title>
        <authorList>
            <person name="Millar A.H."/>
            <person name="Hill S.A."/>
            <person name="Leaver C.J."/>
        </authorList>
    </citation>
    <scope>PROTEIN SEQUENCE OF 1-20</scope>
    <source>
        <strain>cv. Romano</strain>
        <tissue>Tuber</tissue>
    </source>
</reference>
<evidence type="ECO:0000250" key="1"/>
<evidence type="ECO:0000305" key="2"/>
<sequence length="40" mass="3913">ASGSDENDVVVIGGGPGGYVAAIKAAQLGLKTTXIEKRGT</sequence>
<accession>P80503</accession>
<feature type="chain" id="PRO_0000068010" description="Dihydrolipoyl dehydrogenase">
    <location>
        <begin position="1"/>
        <end position="40" status="greater than"/>
    </location>
</feature>
<feature type="binding site" evidence="1">
    <location>
        <begin position="36"/>
        <end position="40"/>
    </location>
    <ligand>
        <name>FAD</name>
        <dbReference type="ChEBI" id="CHEBI:57692"/>
    </ligand>
</feature>
<feature type="non-terminal residue">
    <location>
        <position position="40"/>
    </location>
</feature>
<keyword id="KW-0903">Direct protein sequencing</keyword>
<keyword id="KW-0274">FAD</keyword>
<keyword id="KW-0285">Flavoprotein</keyword>
<keyword id="KW-0496">Mitochondrion</keyword>
<keyword id="KW-0520">NAD</keyword>
<keyword id="KW-0560">Oxidoreductase</keyword>
<keyword id="KW-0676">Redox-active center</keyword>
<keyword id="KW-1185">Reference proteome</keyword>
<name>DLDH_SOLTU</name>